<organism>
    <name type="scientific">Methanocaldococcus jannaschii (strain ATCC 43067 / DSM 2661 / JAL-1 / JCM 10045 / NBRC 100440)</name>
    <name type="common">Methanococcus jannaschii</name>
    <dbReference type="NCBI Taxonomy" id="243232"/>
    <lineage>
        <taxon>Archaea</taxon>
        <taxon>Methanobacteriati</taxon>
        <taxon>Methanobacteriota</taxon>
        <taxon>Methanomada group</taxon>
        <taxon>Methanococci</taxon>
        <taxon>Methanococcales</taxon>
        <taxon>Methanocaldococcaceae</taxon>
        <taxon>Methanocaldococcus</taxon>
    </lineage>
</organism>
<name>Y402_METJA</name>
<proteinExistence type="predicted"/>
<gene>
    <name type="ordered locus">MJ0402</name>
</gene>
<sequence>MFGWGRGWFGRGRGFWRYFPVSTVGGRYRYVGPCRCGLGPHAFYVDEKTGALVHAWDLYRGYVPGYAEVDERRYLEETIKELEEEKRMLEEELARIKKRLDELKKD</sequence>
<accession>Q57845</accession>
<feature type="chain" id="PRO_0000106854" description="Uncharacterized protein MJ0402">
    <location>
        <begin position="1"/>
        <end position="106"/>
    </location>
</feature>
<keyword id="KW-1185">Reference proteome</keyword>
<dbReference type="EMBL" id="L77117">
    <property type="protein sequence ID" value="AAB98395.1"/>
    <property type="molecule type" value="Genomic_DNA"/>
</dbReference>
<dbReference type="PIR" id="B64350">
    <property type="entry name" value="B64350"/>
</dbReference>
<dbReference type="RefSeq" id="WP_010869901.1">
    <property type="nucleotide sequence ID" value="NC_000909.1"/>
</dbReference>
<dbReference type="SMR" id="Q57845"/>
<dbReference type="STRING" id="243232.MJ_0402"/>
<dbReference type="PaxDb" id="243232-MJ_0402"/>
<dbReference type="EnsemblBacteria" id="AAB98395">
    <property type="protein sequence ID" value="AAB98395"/>
    <property type="gene ID" value="MJ_0402"/>
</dbReference>
<dbReference type="GeneID" id="1451262"/>
<dbReference type="KEGG" id="mja:MJ_0402"/>
<dbReference type="eggNOG" id="arCOG08261">
    <property type="taxonomic scope" value="Archaea"/>
</dbReference>
<dbReference type="HOGENOM" id="CLU_181980_0_0_2"/>
<dbReference type="InParanoid" id="Q57845"/>
<dbReference type="OrthoDB" id="66053at2157"/>
<dbReference type="Proteomes" id="UP000000805">
    <property type="component" value="Chromosome"/>
</dbReference>
<protein>
    <recommendedName>
        <fullName>Uncharacterized protein MJ0402</fullName>
    </recommendedName>
</protein>
<reference key="1">
    <citation type="journal article" date="1996" name="Science">
        <title>Complete genome sequence of the methanogenic archaeon, Methanococcus jannaschii.</title>
        <authorList>
            <person name="Bult C.J."/>
            <person name="White O."/>
            <person name="Olsen G.J."/>
            <person name="Zhou L."/>
            <person name="Fleischmann R.D."/>
            <person name="Sutton G.G."/>
            <person name="Blake J.A."/>
            <person name="FitzGerald L.M."/>
            <person name="Clayton R.A."/>
            <person name="Gocayne J.D."/>
            <person name="Kerlavage A.R."/>
            <person name="Dougherty B.A."/>
            <person name="Tomb J.-F."/>
            <person name="Adams M.D."/>
            <person name="Reich C.I."/>
            <person name="Overbeek R."/>
            <person name="Kirkness E.F."/>
            <person name="Weinstock K.G."/>
            <person name="Merrick J.M."/>
            <person name="Glodek A."/>
            <person name="Scott J.L."/>
            <person name="Geoghagen N.S.M."/>
            <person name="Weidman J.F."/>
            <person name="Fuhrmann J.L."/>
            <person name="Nguyen D."/>
            <person name="Utterback T.R."/>
            <person name="Kelley J.M."/>
            <person name="Peterson J.D."/>
            <person name="Sadow P.W."/>
            <person name="Hanna M.C."/>
            <person name="Cotton M.D."/>
            <person name="Roberts K.M."/>
            <person name="Hurst M.A."/>
            <person name="Kaine B.P."/>
            <person name="Borodovsky M."/>
            <person name="Klenk H.-P."/>
            <person name="Fraser C.M."/>
            <person name="Smith H.O."/>
            <person name="Woese C.R."/>
            <person name="Venter J.C."/>
        </authorList>
    </citation>
    <scope>NUCLEOTIDE SEQUENCE [LARGE SCALE GENOMIC DNA]</scope>
    <source>
        <strain>ATCC 43067 / DSM 2661 / JAL-1 / JCM 10045 / NBRC 100440</strain>
    </source>
</reference>